<proteinExistence type="inferred from homology"/>
<name>RL4_SHIB3</name>
<sequence>MELVLKDAQSALTVSETTFGRDFNEALVHQVVVAYAAGARQGTRAQKTRAEVTGSGKKPWRQKGTGRARSGSIKSPIWRSGGVTFAARPQDHSQKVNKKMYRGALKSILSELVRQDRLIVVEKFSVEAPKTKLLAQKLKDMALEDVLIITGELDENLFLAARNLHKVDVRDATGIDPVSLIAFDKVVMTADAVKQVEEMLA</sequence>
<evidence type="ECO:0000255" key="1">
    <source>
        <dbReference type="HAMAP-Rule" id="MF_01328"/>
    </source>
</evidence>
<evidence type="ECO:0000256" key="2">
    <source>
        <dbReference type="SAM" id="MobiDB-lite"/>
    </source>
</evidence>
<evidence type="ECO:0000305" key="3"/>
<comment type="function">
    <text evidence="1">One of the primary rRNA binding proteins, this protein initially binds near the 5'-end of the 23S rRNA. It is important during the early stages of 50S assembly. It makes multiple contacts with different domains of the 23S rRNA in the assembled 50S subunit and ribosome.</text>
</comment>
<comment type="function">
    <text evidence="1">Forms part of the polypeptide exit tunnel.</text>
</comment>
<comment type="subunit">
    <text evidence="1">Part of the 50S ribosomal subunit.</text>
</comment>
<comment type="similarity">
    <text evidence="1">Belongs to the universal ribosomal protein uL4 family.</text>
</comment>
<feature type="chain" id="PRO_1000142188" description="Large ribosomal subunit protein uL4">
    <location>
        <begin position="1"/>
        <end position="201"/>
    </location>
</feature>
<feature type="region of interest" description="Disordered" evidence="2">
    <location>
        <begin position="44"/>
        <end position="71"/>
    </location>
</feature>
<reference key="1">
    <citation type="submission" date="2008-05" db="EMBL/GenBank/DDBJ databases">
        <title>Complete sequence of Shigella boydii serotype 18 strain BS512.</title>
        <authorList>
            <person name="Rasko D.A."/>
            <person name="Rosovitz M."/>
            <person name="Maurelli A.T."/>
            <person name="Myers G."/>
            <person name="Seshadri R."/>
            <person name="Cer R."/>
            <person name="Jiang L."/>
            <person name="Ravel J."/>
            <person name="Sebastian Y."/>
        </authorList>
    </citation>
    <scope>NUCLEOTIDE SEQUENCE [LARGE SCALE GENOMIC DNA]</scope>
    <source>
        <strain>CDC 3083-94 / BS512</strain>
    </source>
</reference>
<keyword id="KW-1185">Reference proteome</keyword>
<keyword id="KW-0687">Ribonucleoprotein</keyword>
<keyword id="KW-0689">Ribosomal protein</keyword>
<keyword id="KW-0694">RNA-binding</keyword>
<keyword id="KW-0699">rRNA-binding</keyword>
<gene>
    <name evidence="1" type="primary">rplD</name>
    <name type="ordered locus">SbBS512_E3704</name>
</gene>
<protein>
    <recommendedName>
        <fullName evidence="1">Large ribosomal subunit protein uL4</fullName>
    </recommendedName>
    <alternativeName>
        <fullName evidence="3">50S ribosomal protein L4</fullName>
    </alternativeName>
</protein>
<accession>B2U2T7</accession>
<dbReference type="EMBL" id="CP001063">
    <property type="protein sequence ID" value="ACD09223.1"/>
    <property type="molecule type" value="Genomic_DNA"/>
</dbReference>
<dbReference type="RefSeq" id="WP_000424395.1">
    <property type="nucleotide sequence ID" value="NC_010658.1"/>
</dbReference>
<dbReference type="SMR" id="B2U2T7"/>
<dbReference type="STRING" id="344609.SbBS512_E3704"/>
<dbReference type="GeneID" id="97442859"/>
<dbReference type="KEGG" id="sbc:SbBS512_E3704"/>
<dbReference type="HOGENOM" id="CLU_041575_5_2_6"/>
<dbReference type="Proteomes" id="UP000001030">
    <property type="component" value="Chromosome"/>
</dbReference>
<dbReference type="GO" id="GO:1990904">
    <property type="term" value="C:ribonucleoprotein complex"/>
    <property type="evidence" value="ECO:0007669"/>
    <property type="project" value="UniProtKB-KW"/>
</dbReference>
<dbReference type="GO" id="GO:0005840">
    <property type="term" value="C:ribosome"/>
    <property type="evidence" value="ECO:0007669"/>
    <property type="project" value="UniProtKB-KW"/>
</dbReference>
<dbReference type="GO" id="GO:0019843">
    <property type="term" value="F:rRNA binding"/>
    <property type="evidence" value="ECO:0007669"/>
    <property type="project" value="UniProtKB-UniRule"/>
</dbReference>
<dbReference type="GO" id="GO:0003735">
    <property type="term" value="F:structural constituent of ribosome"/>
    <property type="evidence" value="ECO:0007669"/>
    <property type="project" value="InterPro"/>
</dbReference>
<dbReference type="GO" id="GO:0006412">
    <property type="term" value="P:translation"/>
    <property type="evidence" value="ECO:0007669"/>
    <property type="project" value="UniProtKB-UniRule"/>
</dbReference>
<dbReference type="FunFam" id="3.40.1370.10:FF:000001">
    <property type="entry name" value="50S ribosomal protein L4"/>
    <property type="match status" value="1"/>
</dbReference>
<dbReference type="Gene3D" id="3.40.1370.10">
    <property type="match status" value="1"/>
</dbReference>
<dbReference type="HAMAP" id="MF_01328_B">
    <property type="entry name" value="Ribosomal_uL4_B"/>
    <property type="match status" value="1"/>
</dbReference>
<dbReference type="InterPro" id="IPR002136">
    <property type="entry name" value="Ribosomal_uL4"/>
</dbReference>
<dbReference type="InterPro" id="IPR013005">
    <property type="entry name" value="Ribosomal_uL4-like"/>
</dbReference>
<dbReference type="InterPro" id="IPR023574">
    <property type="entry name" value="Ribosomal_uL4_dom_sf"/>
</dbReference>
<dbReference type="NCBIfam" id="TIGR03953">
    <property type="entry name" value="rplD_bact"/>
    <property type="match status" value="1"/>
</dbReference>
<dbReference type="PANTHER" id="PTHR10746">
    <property type="entry name" value="50S RIBOSOMAL PROTEIN L4"/>
    <property type="match status" value="1"/>
</dbReference>
<dbReference type="PANTHER" id="PTHR10746:SF6">
    <property type="entry name" value="LARGE RIBOSOMAL SUBUNIT PROTEIN UL4M"/>
    <property type="match status" value="1"/>
</dbReference>
<dbReference type="Pfam" id="PF00573">
    <property type="entry name" value="Ribosomal_L4"/>
    <property type="match status" value="1"/>
</dbReference>
<dbReference type="SUPFAM" id="SSF52166">
    <property type="entry name" value="Ribosomal protein L4"/>
    <property type="match status" value="1"/>
</dbReference>
<organism>
    <name type="scientific">Shigella boydii serotype 18 (strain CDC 3083-94 / BS512)</name>
    <dbReference type="NCBI Taxonomy" id="344609"/>
    <lineage>
        <taxon>Bacteria</taxon>
        <taxon>Pseudomonadati</taxon>
        <taxon>Pseudomonadota</taxon>
        <taxon>Gammaproteobacteria</taxon>
        <taxon>Enterobacterales</taxon>
        <taxon>Enterobacteriaceae</taxon>
        <taxon>Shigella</taxon>
    </lineage>
</organism>